<protein>
    <recommendedName>
        <fullName evidence="1">Phosphoribosyl-AMP cyclohydrolase</fullName>
        <shortName evidence="1">PRA-CH</shortName>
        <ecNumber evidence="1">3.5.4.19</ecNumber>
    </recommendedName>
</protein>
<gene>
    <name evidence="1" type="primary">hisI</name>
    <name type="ordered locus">lmo0562</name>
</gene>
<dbReference type="EC" id="3.5.4.19" evidence="1"/>
<dbReference type="EMBL" id="AL591975">
    <property type="protein sequence ID" value="CAC98641.1"/>
    <property type="molecule type" value="Genomic_DNA"/>
</dbReference>
<dbReference type="PIR" id="AC1145">
    <property type="entry name" value="AC1145"/>
</dbReference>
<dbReference type="RefSeq" id="NP_464090.1">
    <property type="nucleotide sequence ID" value="NC_003210.1"/>
</dbReference>
<dbReference type="RefSeq" id="WP_003721356.1">
    <property type="nucleotide sequence ID" value="NZ_CP149495.1"/>
</dbReference>
<dbReference type="SMR" id="Q8Y9G6"/>
<dbReference type="STRING" id="169963.gene:17593213"/>
<dbReference type="PaxDb" id="169963-lmo0562"/>
<dbReference type="DNASU" id="984519"/>
<dbReference type="EnsemblBacteria" id="CAC98641">
    <property type="protein sequence ID" value="CAC98641"/>
    <property type="gene ID" value="CAC98641"/>
</dbReference>
<dbReference type="GeneID" id="984519"/>
<dbReference type="KEGG" id="lmo:lmo0562"/>
<dbReference type="PATRIC" id="fig|169963.11.peg.581"/>
<dbReference type="eggNOG" id="COG0139">
    <property type="taxonomic scope" value="Bacteria"/>
</dbReference>
<dbReference type="HOGENOM" id="CLU_048577_5_3_9"/>
<dbReference type="OrthoDB" id="9795769at2"/>
<dbReference type="PhylomeDB" id="Q8Y9G6"/>
<dbReference type="BioCyc" id="LMON169963:LMO0562-MONOMER"/>
<dbReference type="UniPathway" id="UPA00031">
    <property type="reaction ID" value="UER00008"/>
</dbReference>
<dbReference type="Proteomes" id="UP000000817">
    <property type="component" value="Chromosome"/>
</dbReference>
<dbReference type="GO" id="GO:0005737">
    <property type="term" value="C:cytoplasm"/>
    <property type="evidence" value="ECO:0007669"/>
    <property type="project" value="UniProtKB-SubCell"/>
</dbReference>
<dbReference type="GO" id="GO:0000287">
    <property type="term" value="F:magnesium ion binding"/>
    <property type="evidence" value="ECO:0007669"/>
    <property type="project" value="UniProtKB-UniRule"/>
</dbReference>
<dbReference type="GO" id="GO:0004635">
    <property type="term" value="F:phosphoribosyl-AMP cyclohydrolase activity"/>
    <property type="evidence" value="ECO:0007669"/>
    <property type="project" value="UniProtKB-UniRule"/>
</dbReference>
<dbReference type="GO" id="GO:0008270">
    <property type="term" value="F:zinc ion binding"/>
    <property type="evidence" value="ECO:0007669"/>
    <property type="project" value="UniProtKB-UniRule"/>
</dbReference>
<dbReference type="GO" id="GO:0000105">
    <property type="term" value="P:L-histidine biosynthetic process"/>
    <property type="evidence" value="ECO:0007669"/>
    <property type="project" value="UniProtKB-UniRule"/>
</dbReference>
<dbReference type="FunFam" id="3.10.20.810:FF:000001">
    <property type="entry name" value="Histidine biosynthesis bifunctional protein HisIE"/>
    <property type="match status" value="1"/>
</dbReference>
<dbReference type="Gene3D" id="3.10.20.810">
    <property type="entry name" value="Phosphoribosyl-AMP cyclohydrolase"/>
    <property type="match status" value="1"/>
</dbReference>
<dbReference type="HAMAP" id="MF_01021">
    <property type="entry name" value="HisI"/>
    <property type="match status" value="1"/>
</dbReference>
<dbReference type="InterPro" id="IPR026660">
    <property type="entry name" value="PRA-CH"/>
</dbReference>
<dbReference type="InterPro" id="IPR002496">
    <property type="entry name" value="PRib_AMP_CycHydrolase_dom"/>
</dbReference>
<dbReference type="InterPro" id="IPR038019">
    <property type="entry name" value="PRib_AMP_CycHydrolase_sf"/>
</dbReference>
<dbReference type="NCBIfam" id="NF000768">
    <property type="entry name" value="PRK00051.1"/>
    <property type="match status" value="1"/>
</dbReference>
<dbReference type="PANTHER" id="PTHR42945">
    <property type="entry name" value="HISTIDINE BIOSYNTHESIS BIFUNCTIONAL PROTEIN"/>
    <property type="match status" value="1"/>
</dbReference>
<dbReference type="PANTHER" id="PTHR42945:SF1">
    <property type="entry name" value="HISTIDINE BIOSYNTHESIS BIFUNCTIONAL PROTEIN HIS7"/>
    <property type="match status" value="1"/>
</dbReference>
<dbReference type="Pfam" id="PF01502">
    <property type="entry name" value="PRA-CH"/>
    <property type="match status" value="1"/>
</dbReference>
<dbReference type="SUPFAM" id="SSF141734">
    <property type="entry name" value="HisI-like"/>
    <property type="match status" value="1"/>
</dbReference>
<feature type="chain" id="PRO_0000136483" description="Phosphoribosyl-AMP cyclohydrolase">
    <location>
        <begin position="1"/>
        <end position="105"/>
    </location>
</feature>
<feature type="binding site" evidence="1">
    <location>
        <position position="72"/>
    </location>
    <ligand>
        <name>Mg(2+)</name>
        <dbReference type="ChEBI" id="CHEBI:18420"/>
    </ligand>
</feature>
<feature type="binding site" evidence="1">
    <location>
        <position position="73"/>
    </location>
    <ligand>
        <name>Zn(2+)</name>
        <dbReference type="ChEBI" id="CHEBI:29105"/>
        <note>ligand shared between dimeric partners</note>
    </ligand>
</feature>
<feature type="binding site" evidence="1">
    <location>
        <position position="74"/>
    </location>
    <ligand>
        <name>Mg(2+)</name>
        <dbReference type="ChEBI" id="CHEBI:18420"/>
    </ligand>
</feature>
<feature type="binding site" evidence="1">
    <location>
        <position position="76"/>
    </location>
    <ligand>
        <name>Mg(2+)</name>
        <dbReference type="ChEBI" id="CHEBI:18420"/>
    </ligand>
</feature>
<feature type="binding site" evidence="1">
    <location>
        <position position="89"/>
    </location>
    <ligand>
        <name>Zn(2+)</name>
        <dbReference type="ChEBI" id="CHEBI:29105"/>
        <note>ligand shared between dimeric partners</note>
    </ligand>
</feature>
<feature type="binding site" evidence="1">
    <location>
        <position position="96"/>
    </location>
    <ligand>
        <name>Zn(2+)</name>
        <dbReference type="ChEBI" id="CHEBI:29105"/>
        <note>ligand shared between dimeric partners</note>
    </ligand>
</feature>
<proteinExistence type="inferred from homology"/>
<name>HIS3_LISMO</name>
<organism>
    <name type="scientific">Listeria monocytogenes serovar 1/2a (strain ATCC BAA-679 / EGD-e)</name>
    <dbReference type="NCBI Taxonomy" id="169963"/>
    <lineage>
        <taxon>Bacteria</taxon>
        <taxon>Bacillati</taxon>
        <taxon>Bacillota</taxon>
        <taxon>Bacilli</taxon>
        <taxon>Bacillales</taxon>
        <taxon>Listeriaceae</taxon>
        <taxon>Listeria</taxon>
    </lineage>
</organism>
<reference key="1">
    <citation type="journal article" date="2001" name="Science">
        <title>Comparative genomics of Listeria species.</title>
        <authorList>
            <person name="Glaser P."/>
            <person name="Frangeul L."/>
            <person name="Buchrieser C."/>
            <person name="Rusniok C."/>
            <person name="Amend A."/>
            <person name="Baquero F."/>
            <person name="Berche P."/>
            <person name="Bloecker H."/>
            <person name="Brandt P."/>
            <person name="Chakraborty T."/>
            <person name="Charbit A."/>
            <person name="Chetouani F."/>
            <person name="Couve E."/>
            <person name="de Daruvar A."/>
            <person name="Dehoux P."/>
            <person name="Domann E."/>
            <person name="Dominguez-Bernal G."/>
            <person name="Duchaud E."/>
            <person name="Durant L."/>
            <person name="Dussurget O."/>
            <person name="Entian K.-D."/>
            <person name="Fsihi H."/>
            <person name="Garcia-del Portillo F."/>
            <person name="Garrido P."/>
            <person name="Gautier L."/>
            <person name="Goebel W."/>
            <person name="Gomez-Lopez N."/>
            <person name="Hain T."/>
            <person name="Hauf J."/>
            <person name="Jackson D."/>
            <person name="Jones L.-M."/>
            <person name="Kaerst U."/>
            <person name="Kreft J."/>
            <person name="Kuhn M."/>
            <person name="Kunst F."/>
            <person name="Kurapkat G."/>
            <person name="Madueno E."/>
            <person name="Maitournam A."/>
            <person name="Mata Vicente J."/>
            <person name="Ng E."/>
            <person name="Nedjari H."/>
            <person name="Nordsiek G."/>
            <person name="Novella S."/>
            <person name="de Pablos B."/>
            <person name="Perez-Diaz J.-C."/>
            <person name="Purcell R."/>
            <person name="Remmel B."/>
            <person name="Rose M."/>
            <person name="Schlueter T."/>
            <person name="Simoes N."/>
            <person name="Tierrez A."/>
            <person name="Vazquez-Boland J.-A."/>
            <person name="Voss H."/>
            <person name="Wehland J."/>
            <person name="Cossart P."/>
        </authorList>
    </citation>
    <scope>NUCLEOTIDE SEQUENCE [LARGE SCALE GENOMIC DNA]</scope>
    <source>
        <strain>ATCC BAA-679 / EGD-e</strain>
    </source>
</reference>
<sequence>MISVDFSKGLVPTIILDDQNGDVLMLAYMNEESYQKTLETGYTWFFSRSRNELWNKGATSGHTQKVKQIWTDCDNDTLLIRVTQIGPACHTGKKSCFFNLIKEDF</sequence>
<keyword id="KW-0028">Amino-acid biosynthesis</keyword>
<keyword id="KW-0963">Cytoplasm</keyword>
<keyword id="KW-0368">Histidine biosynthesis</keyword>
<keyword id="KW-0378">Hydrolase</keyword>
<keyword id="KW-0460">Magnesium</keyword>
<keyword id="KW-0479">Metal-binding</keyword>
<keyword id="KW-1185">Reference proteome</keyword>
<keyword id="KW-0862">Zinc</keyword>
<evidence type="ECO:0000255" key="1">
    <source>
        <dbReference type="HAMAP-Rule" id="MF_01021"/>
    </source>
</evidence>
<accession>Q8Y9G6</accession>
<comment type="function">
    <text evidence="1">Catalyzes the hydrolysis of the adenine ring of phosphoribosyl-AMP.</text>
</comment>
<comment type="catalytic activity">
    <reaction evidence="1">
        <text>1-(5-phospho-beta-D-ribosyl)-5'-AMP + H2O = 1-(5-phospho-beta-D-ribosyl)-5-[(5-phospho-beta-D-ribosylamino)methylideneamino]imidazole-4-carboxamide</text>
        <dbReference type="Rhea" id="RHEA:20049"/>
        <dbReference type="ChEBI" id="CHEBI:15377"/>
        <dbReference type="ChEBI" id="CHEBI:58435"/>
        <dbReference type="ChEBI" id="CHEBI:59457"/>
        <dbReference type="EC" id="3.5.4.19"/>
    </reaction>
</comment>
<comment type="cofactor">
    <cofactor evidence="1">
        <name>Mg(2+)</name>
        <dbReference type="ChEBI" id="CHEBI:18420"/>
    </cofactor>
    <text evidence="1">Binds 1 Mg(2+) ion per subunit.</text>
</comment>
<comment type="cofactor">
    <cofactor evidence="1">
        <name>Zn(2+)</name>
        <dbReference type="ChEBI" id="CHEBI:29105"/>
    </cofactor>
    <text evidence="1">Binds 1 zinc ion per subunit.</text>
</comment>
<comment type="pathway">
    <text evidence="1">Amino-acid biosynthesis; L-histidine biosynthesis; L-histidine from 5-phospho-alpha-D-ribose 1-diphosphate: step 3/9.</text>
</comment>
<comment type="subunit">
    <text evidence="1">Homodimer.</text>
</comment>
<comment type="subcellular location">
    <subcellularLocation>
        <location evidence="1">Cytoplasm</location>
    </subcellularLocation>
</comment>
<comment type="similarity">
    <text evidence="1">Belongs to the PRA-CH family.</text>
</comment>